<feature type="chain" id="PRO_1000054292" description="Multifunctional CCA protein">
    <location>
        <begin position="1"/>
        <end position="416"/>
    </location>
</feature>
<feature type="domain" description="HD" evidence="1">
    <location>
        <begin position="228"/>
        <end position="329"/>
    </location>
</feature>
<feature type="binding site" evidence="1">
    <location>
        <position position="8"/>
    </location>
    <ligand>
        <name>ATP</name>
        <dbReference type="ChEBI" id="CHEBI:30616"/>
    </ligand>
</feature>
<feature type="binding site" evidence="1">
    <location>
        <position position="8"/>
    </location>
    <ligand>
        <name>CTP</name>
        <dbReference type="ChEBI" id="CHEBI:37563"/>
    </ligand>
</feature>
<feature type="binding site" evidence="1">
    <location>
        <position position="11"/>
    </location>
    <ligand>
        <name>ATP</name>
        <dbReference type="ChEBI" id="CHEBI:30616"/>
    </ligand>
</feature>
<feature type="binding site" evidence="1">
    <location>
        <position position="11"/>
    </location>
    <ligand>
        <name>CTP</name>
        <dbReference type="ChEBI" id="CHEBI:37563"/>
    </ligand>
</feature>
<feature type="binding site" evidence="1">
    <location>
        <position position="21"/>
    </location>
    <ligand>
        <name>Mg(2+)</name>
        <dbReference type="ChEBI" id="CHEBI:18420"/>
    </ligand>
</feature>
<feature type="binding site" evidence="1">
    <location>
        <position position="23"/>
    </location>
    <ligand>
        <name>Mg(2+)</name>
        <dbReference type="ChEBI" id="CHEBI:18420"/>
    </ligand>
</feature>
<feature type="binding site" evidence="1">
    <location>
        <position position="91"/>
    </location>
    <ligand>
        <name>ATP</name>
        <dbReference type="ChEBI" id="CHEBI:30616"/>
    </ligand>
</feature>
<feature type="binding site" evidence="1">
    <location>
        <position position="91"/>
    </location>
    <ligand>
        <name>CTP</name>
        <dbReference type="ChEBI" id="CHEBI:37563"/>
    </ligand>
</feature>
<feature type="binding site" evidence="1">
    <location>
        <position position="137"/>
    </location>
    <ligand>
        <name>ATP</name>
        <dbReference type="ChEBI" id="CHEBI:30616"/>
    </ligand>
</feature>
<feature type="binding site" evidence="1">
    <location>
        <position position="137"/>
    </location>
    <ligand>
        <name>CTP</name>
        <dbReference type="ChEBI" id="CHEBI:37563"/>
    </ligand>
</feature>
<feature type="binding site" evidence="1">
    <location>
        <position position="140"/>
    </location>
    <ligand>
        <name>ATP</name>
        <dbReference type="ChEBI" id="CHEBI:30616"/>
    </ligand>
</feature>
<feature type="binding site" evidence="1">
    <location>
        <position position="140"/>
    </location>
    <ligand>
        <name>CTP</name>
        <dbReference type="ChEBI" id="CHEBI:37563"/>
    </ligand>
</feature>
<gene>
    <name evidence="1" type="primary">cca</name>
    <name type="ordered locus">Shew185_1199</name>
</gene>
<accession>A6WKL1</accession>
<reference key="1">
    <citation type="submission" date="2007-07" db="EMBL/GenBank/DDBJ databases">
        <title>Complete sequence of chromosome of Shewanella baltica OS185.</title>
        <authorList>
            <consortium name="US DOE Joint Genome Institute"/>
            <person name="Copeland A."/>
            <person name="Lucas S."/>
            <person name="Lapidus A."/>
            <person name="Barry K."/>
            <person name="Glavina del Rio T."/>
            <person name="Dalin E."/>
            <person name="Tice H."/>
            <person name="Pitluck S."/>
            <person name="Sims D."/>
            <person name="Brettin T."/>
            <person name="Bruce D."/>
            <person name="Detter J.C."/>
            <person name="Han C."/>
            <person name="Schmutz J."/>
            <person name="Larimer F."/>
            <person name="Land M."/>
            <person name="Hauser L."/>
            <person name="Kyrpides N."/>
            <person name="Mikhailova N."/>
            <person name="Brettar I."/>
            <person name="Rodrigues J."/>
            <person name="Konstantinidis K."/>
            <person name="Tiedje J."/>
            <person name="Richardson P."/>
        </authorList>
    </citation>
    <scope>NUCLEOTIDE SEQUENCE [LARGE SCALE GENOMIC DNA]</scope>
    <source>
        <strain>OS185</strain>
    </source>
</reference>
<protein>
    <recommendedName>
        <fullName evidence="1">Multifunctional CCA protein</fullName>
    </recommendedName>
    <domain>
        <recommendedName>
            <fullName evidence="1">CCA-adding enzyme</fullName>
            <ecNumber evidence="1">2.7.7.72</ecNumber>
        </recommendedName>
        <alternativeName>
            <fullName evidence="1">CCA tRNA nucleotidyltransferase</fullName>
        </alternativeName>
        <alternativeName>
            <fullName evidence="1">tRNA CCA-pyrophosphorylase</fullName>
        </alternativeName>
        <alternativeName>
            <fullName evidence="1">tRNA adenylyl-/cytidylyl-transferase</fullName>
        </alternativeName>
        <alternativeName>
            <fullName evidence="1">tRNA nucleotidyltransferase</fullName>
        </alternativeName>
        <alternativeName>
            <fullName evidence="1">tRNA-NT</fullName>
        </alternativeName>
    </domain>
    <domain>
        <recommendedName>
            <fullName evidence="1">2'-nucleotidase</fullName>
            <ecNumber evidence="1">3.1.3.-</ecNumber>
        </recommendedName>
    </domain>
    <domain>
        <recommendedName>
            <fullName evidence="1">2',3'-cyclic phosphodiesterase</fullName>
            <ecNumber evidence="1">3.1.4.-</ecNumber>
        </recommendedName>
    </domain>
    <domain>
        <recommendedName>
            <fullName evidence="1">Phosphatase</fullName>
            <ecNumber evidence="1">3.1.3.-</ecNumber>
        </recommendedName>
    </domain>
</protein>
<proteinExistence type="inferred from homology"/>
<evidence type="ECO:0000255" key="1">
    <source>
        <dbReference type="HAMAP-Rule" id="MF_01261"/>
    </source>
</evidence>
<name>CCA_SHEB8</name>
<comment type="function">
    <text evidence="1">Catalyzes the addition and repair of the essential 3'-terminal CCA sequence in tRNAs without using a nucleic acid template. Adds these three nucleotides in the order of C, C, and A to the tRNA nucleotide-73, using CTP and ATP as substrates and producing inorganic pyrophosphate. tRNA 3'-terminal CCA addition is required both for tRNA processing and repair. Also involved in tRNA surveillance by mediating tandem CCA addition to generate a CCACCA at the 3' terminus of unstable tRNAs. While stable tRNAs receive only 3'-terminal CCA, unstable tRNAs are marked with CCACCA and rapidly degraded.</text>
</comment>
<comment type="catalytic activity">
    <reaction evidence="1">
        <text>a tRNA precursor + 2 CTP + ATP = a tRNA with a 3' CCA end + 3 diphosphate</text>
        <dbReference type="Rhea" id="RHEA:14433"/>
        <dbReference type="Rhea" id="RHEA-COMP:10465"/>
        <dbReference type="Rhea" id="RHEA-COMP:10468"/>
        <dbReference type="ChEBI" id="CHEBI:30616"/>
        <dbReference type="ChEBI" id="CHEBI:33019"/>
        <dbReference type="ChEBI" id="CHEBI:37563"/>
        <dbReference type="ChEBI" id="CHEBI:74896"/>
        <dbReference type="ChEBI" id="CHEBI:83071"/>
        <dbReference type="EC" id="2.7.7.72"/>
    </reaction>
</comment>
<comment type="catalytic activity">
    <reaction evidence="1">
        <text>a tRNA with a 3' CCA end + 2 CTP + ATP = a tRNA with a 3' CCACCA end + 3 diphosphate</text>
        <dbReference type="Rhea" id="RHEA:76235"/>
        <dbReference type="Rhea" id="RHEA-COMP:10468"/>
        <dbReference type="Rhea" id="RHEA-COMP:18655"/>
        <dbReference type="ChEBI" id="CHEBI:30616"/>
        <dbReference type="ChEBI" id="CHEBI:33019"/>
        <dbReference type="ChEBI" id="CHEBI:37563"/>
        <dbReference type="ChEBI" id="CHEBI:83071"/>
        <dbReference type="ChEBI" id="CHEBI:195187"/>
    </reaction>
    <physiologicalReaction direction="left-to-right" evidence="1">
        <dbReference type="Rhea" id="RHEA:76236"/>
    </physiologicalReaction>
</comment>
<comment type="cofactor">
    <cofactor evidence="1">
        <name>Mg(2+)</name>
        <dbReference type="ChEBI" id="CHEBI:18420"/>
    </cofactor>
    <text evidence="1">Magnesium is required for nucleotidyltransferase activity.</text>
</comment>
<comment type="cofactor">
    <cofactor evidence="1">
        <name>Ni(2+)</name>
        <dbReference type="ChEBI" id="CHEBI:49786"/>
    </cofactor>
    <text evidence="1">Nickel for phosphatase activity.</text>
</comment>
<comment type="subunit">
    <text evidence="1">Monomer. Can also form homodimers and oligomers.</text>
</comment>
<comment type="domain">
    <text evidence="1">Comprises two domains: an N-terminal domain containing the nucleotidyltransferase activity and a C-terminal HD domain associated with both phosphodiesterase and phosphatase activities.</text>
</comment>
<comment type="miscellaneous">
    <text evidence="1">A single active site specifically recognizes both ATP and CTP and is responsible for their addition.</text>
</comment>
<comment type="similarity">
    <text evidence="1">Belongs to the tRNA nucleotidyltransferase/poly(A) polymerase family. Bacterial CCA-adding enzyme type 1 subfamily.</text>
</comment>
<dbReference type="EC" id="2.7.7.72" evidence="1"/>
<dbReference type="EC" id="3.1.3.-" evidence="1"/>
<dbReference type="EC" id="3.1.4.-" evidence="1"/>
<dbReference type="EMBL" id="CP000753">
    <property type="protein sequence ID" value="ABS07350.1"/>
    <property type="molecule type" value="Genomic_DNA"/>
</dbReference>
<dbReference type="RefSeq" id="WP_012088577.1">
    <property type="nucleotide sequence ID" value="NC_009665.1"/>
</dbReference>
<dbReference type="SMR" id="A6WKL1"/>
<dbReference type="KEGG" id="sbm:Shew185_1199"/>
<dbReference type="HOGENOM" id="CLU_015961_1_1_6"/>
<dbReference type="GO" id="GO:0005524">
    <property type="term" value="F:ATP binding"/>
    <property type="evidence" value="ECO:0007669"/>
    <property type="project" value="UniProtKB-UniRule"/>
</dbReference>
<dbReference type="GO" id="GO:0004810">
    <property type="term" value="F:CCA tRNA nucleotidyltransferase activity"/>
    <property type="evidence" value="ECO:0007669"/>
    <property type="project" value="UniProtKB-UniRule"/>
</dbReference>
<dbReference type="GO" id="GO:0004112">
    <property type="term" value="F:cyclic-nucleotide phosphodiesterase activity"/>
    <property type="evidence" value="ECO:0007669"/>
    <property type="project" value="UniProtKB-UniRule"/>
</dbReference>
<dbReference type="GO" id="GO:0000287">
    <property type="term" value="F:magnesium ion binding"/>
    <property type="evidence" value="ECO:0007669"/>
    <property type="project" value="UniProtKB-UniRule"/>
</dbReference>
<dbReference type="GO" id="GO:0016791">
    <property type="term" value="F:phosphatase activity"/>
    <property type="evidence" value="ECO:0007669"/>
    <property type="project" value="UniProtKB-UniRule"/>
</dbReference>
<dbReference type="GO" id="GO:0000049">
    <property type="term" value="F:tRNA binding"/>
    <property type="evidence" value="ECO:0007669"/>
    <property type="project" value="UniProtKB-UniRule"/>
</dbReference>
<dbReference type="GO" id="GO:0042245">
    <property type="term" value="P:RNA repair"/>
    <property type="evidence" value="ECO:0007669"/>
    <property type="project" value="UniProtKB-KW"/>
</dbReference>
<dbReference type="GO" id="GO:0001680">
    <property type="term" value="P:tRNA 3'-terminal CCA addition"/>
    <property type="evidence" value="ECO:0007669"/>
    <property type="project" value="UniProtKB-UniRule"/>
</dbReference>
<dbReference type="CDD" id="cd00077">
    <property type="entry name" value="HDc"/>
    <property type="match status" value="1"/>
</dbReference>
<dbReference type="CDD" id="cd05398">
    <property type="entry name" value="NT_ClassII-CCAase"/>
    <property type="match status" value="1"/>
</dbReference>
<dbReference type="FunFam" id="1.10.3090.10:FF:000001">
    <property type="entry name" value="Multifunctional CCA protein"/>
    <property type="match status" value="1"/>
</dbReference>
<dbReference type="Gene3D" id="3.30.460.10">
    <property type="entry name" value="Beta Polymerase, domain 2"/>
    <property type="match status" value="1"/>
</dbReference>
<dbReference type="Gene3D" id="1.10.3090.10">
    <property type="entry name" value="cca-adding enzyme, domain 2"/>
    <property type="match status" value="1"/>
</dbReference>
<dbReference type="HAMAP" id="MF_01261">
    <property type="entry name" value="CCA_bact_type1"/>
    <property type="match status" value="1"/>
</dbReference>
<dbReference type="HAMAP" id="MF_01262">
    <property type="entry name" value="CCA_bact_type2"/>
    <property type="match status" value="1"/>
</dbReference>
<dbReference type="InterPro" id="IPR012006">
    <property type="entry name" value="CCA_bact"/>
</dbReference>
<dbReference type="InterPro" id="IPR003607">
    <property type="entry name" value="HD/PDEase_dom"/>
</dbReference>
<dbReference type="InterPro" id="IPR006674">
    <property type="entry name" value="HD_domain"/>
</dbReference>
<dbReference type="InterPro" id="IPR043519">
    <property type="entry name" value="NT_sf"/>
</dbReference>
<dbReference type="InterPro" id="IPR002646">
    <property type="entry name" value="PolA_pol_head_dom"/>
</dbReference>
<dbReference type="InterPro" id="IPR032828">
    <property type="entry name" value="PolyA_RNA-bd"/>
</dbReference>
<dbReference type="InterPro" id="IPR050124">
    <property type="entry name" value="tRNA_CCA-adding_enzyme"/>
</dbReference>
<dbReference type="NCBIfam" id="NF008137">
    <property type="entry name" value="PRK10885.1"/>
    <property type="match status" value="1"/>
</dbReference>
<dbReference type="PANTHER" id="PTHR47545">
    <property type="entry name" value="MULTIFUNCTIONAL CCA PROTEIN"/>
    <property type="match status" value="1"/>
</dbReference>
<dbReference type="PANTHER" id="PTHR47545:SF1">
    <property type="entry name" value="MULTIFUNCTIONAL CCA PROTEIN"/>
    <property type="match status" value="1"/>
</dbReference>
<dbReference type="Pfam" id="PF01966">
    <property type="entry name" value="HD"/>
    <property type="match status" value="1"/>
</dbReference>
<dbReference type="Pfam" id="PF01743">
    <property type="entry name" value="PolyA_pol"/>
    <property type="match status" value="1"/>
</dbReference>
<dbReference type="Pfam" id="PF12627">
    <property type="entry name" value="PolyA_pol_RNAbd"/>
    <property type="match status" value="1"/>
</dbReference>
<dbReference type="PIRSF" id="PIRSF000813">
    <property type="entry name" value="CCA_bact"/>
    <property type="match status" value="1"/>
</dbReference>
<dbReference type="SUPFAM" id="SSF81301">
    <property type="entry name" value="Nucleotidyltransferase"/>
    <property type="match status" value="1"/>
</dbReference>
<dbReference type="SUPFAM" id="SSF81891">
    <property type="entry name" value="Poly A polymerase C-terminal region-like"/>
    <property type="match status" value="1"/>
</dbReference>
<dbReference type="PROSITE" id="PS51831">
    <property type="entry name" value="HD"/>
    <property type="match status" value="1"/>
</dbReference>
<organism>
    <name type="scientific">Shewanella baltica (strain OS185)</name>
    <dbReference type="NCBI Taxonomy" id="402882"/>
    <lineage>
        <taxon>Bacteria</taxon>
        <taxon>Pseudomonadati</taxon>
        <taxon>Pseudomonadota</taxon>
        <taxon>Gammaproteobacteria</taxon>
        <taxon>Alteromonadales</taxon>
        <taxon>Shewanellaceae</taxon>
        <taxon>Shewanella</taxon>
    </lineage>
</organism>
<keyword id="KW-0067">ATP-binding</keyword>
<keyword id="KW-0378">Hydrolase</keyword>
<keyword id="KW-0460">Magnesium</keyword>
<keyword id="KW-0479">Metal-binding</keyword>
<keyword id="KW-0511">Multifunctional enzyme</keyword>
<keyword id="KW-0533">Nickel</keyword>
<keyword id="KW-0547">Nucleotide-binding</keyword>
<keyword id="KW-0548">Nucleotidyltransferase</keyword>
<keyword id="KW-0692">RNA repair</keyword>
<keyword id="KW-0694">RNA-binding</keyword>
<keyword id="KW-0808">Transferase</keyword>
<keyword id="KW-0819">tRNA processing</keyword>
<sequence>MKIYLVGGAVRDSLLNLPIKDKDYLVVGATPEQMLQLGYRQVGKDFPVFLHPKNQQEYALARTERKIGLGYGGFSCHASPDVTLEQDLLRRDLTINAIAQDEKGNLYDPFNGIEDINARLLRHVSDAFVEDPLRVLRVARFAARFHALGFHIAAETLALMRQISASDELNALTAERVWQEVDKSLGGPHPEVFFEVLHQCGALEVLFPEIFALFGVPQPEKWHPEIDTGVHTLMVLAQAALLTEDKSVRFAALVHDLGKALSPKEHLPKHHGHGQKGLPLIKALCTRLRVPNETRDLALLVSDQHQNVHQAFELRAETIVKIFDKADFWRKPERLTQLILACTADMRGRTGFENNLYPQGEYLTQCFLAANNVDIAAIIAAGFQGAEIKQALNLRRIEAVSQFKQKMQTKLPTDER</sequence>